<feature type="chain" id="PRO_0000178906" description="UDP-N-acetylglucosamine 1-carboxyvinyltransferase 1">
    <location>
        <begin position="1"/>
        <end position="430"/>
    </location>
</feature>
<feature type="active site" description="Proton donor" evidence="1">
    <location>
        <position position="126"/>
    </location>
</feature>
<feature type="binding site" evidence="1">
    <location>
        <begin position="22"/>
        <end position="23"/>
    </location>
    <ligand>
        <name>phosphoenolpyruvate</name>
        <dbReference type="ChEBI" id="CHEBI:58702"/>
    </ligand>
</feature>
<feature type="binding site" evidence="1">
    <location>
        <position position="102"/>
    </location>
    <ligand>
        <name>UDP-N-acetyl-alpha-D-glucosamine</name>
        <dbReference type="ChEBI" id="CHEBI:57705"/>
    </ligand>
</feature>
<feature type="binding site" evidence="1">
    <location>
        <begin position="131"/>
        <end position="135"/>
    </location>
    <ligand>
        <name>UDP-N-acetyl-alpha-D-glucosamine</name>
        <dbReference type="ChEBI" id="CHEBI:57705"/>
    </ligand>
</feature>
<feature type="binding site" evidence="1">
    <location>
        <begin position="172"/>
        <end position="175"/>
    </location>
    <ligand>
        <name>UDP-N-acetyl-alpha-D-glucosamine</name>
        <dbReference type="ChEBI" id="CHEBI:57705"/>
    </ligand>
</feature>
<feature type="binding site" evidence="1">
    <location>
        <position position="317"/>
    </location>
    <ligand>
        <name>UDP-N-acetyl-alpha-D-glucosamine</name>
        <dbReference type="ChEBI" id="CHEBI:57705"/>
    </ligand>
</feature>
<feature type="binding site" evidence="1">
    <location>
        <position position="339"/>
    </location>
    <ligand>
        <name>UDP-N-acetyl-alpha-D-glucosamine</name>
        <dbReference type="ChEBI" id="CHEBI:57705"/>
    </ligand>
</feature>
<feature type="modified residue" description="2-(S-cysteinyl)pyruvic acid O-phosphothioketal" evidence="1">
    <location>
        <position position="126"/>
    </location>
</feature>
<comment type="function">
    <text evidence="1">Cell wall formation. Adds enolpyruvyl to UDP-N-acetylglucosamine.</text>
</comment>
<comment type="catalytic activity">
    <reaction evidence="1">
        <text>phosphoenolpyruvate + UDP-N-acetyl-alpha-D-glucosamine = UDP-N-acetyl-3-O-(1-carboxyvinyl)-alpha-D-glucosamine + phosphate</text>
        <dbReference type="Rhea" id="RHEA:18681"/>
        <dbReference type="ChEBI" id="CHEBI:43474"/>
        <dbReference type="ChEBI" id="CHEBI:57705"/>
        <dbReference type="ChEBI" id="CHEBI:58702"/>
        <dbReference type="ChEBI" id="CHEBI:68483"/>
        <dbReference type="EC" id="2.5.1.7"/>
    </reaction>
</comment>
<comment type="pathway">
    <text evidence="1">Cell wall biogenesis; peptidoglycan biosynthesis.</text>
</comment>
<comment type="subcellular location">
    <subcellularLocation>
        <location evidence="1">Cytoplasm</location>
    </subcellularLocation>
</comment>
<comment type="similarity">
    <text evidence="1">Belongs to the EPSP synthase family. MurA subfamily.</text>
</comment>
<evidence type="ECO:0000255" key="1">
    <source>
        <dbReference type="HAMAP-Rule" id="MF_00111"/>
    </source>
</evidence>
<organism>
    <name type="scientific">Mesorhizobium japonicum (strain LMG 29417 / CECT 9101 / MAFF 303099)</name>
    <name type="common">Mesorhizobium loti (strain MAFF 303099)</name>
    <dbReference type="NCBI Taxonomy" id="266835"/>
    <lineage>
        <taxon>Bacteria</taxon>
        <taxon>Pseudomonadati</taxon>
        <taxon>Pseudomonadota</taxon>
        <taxon>Alphaproteobacteria</taxon>
        <taxon>Hyphomicrobiales</taxon>
        <taxon>Phyllobacteriaceae</taxon>
        <taxon>Mesorhizobium</taxon>
    </lineage>
</organism>
<accession>Q989E5</accession>
<name>MURA1_RHILO</name>
<reference key="1">
    <citation type="journal article" date="2000" name="DNA Res.">
        <title>Complete genome structure of the nitrogen-fixing symbiotic bacterium Mesorhizobium loti.</title>
        <authorList>
            <person name="Kaneko T."/>
            <person name="Nakamura Y."/>
            <person name="Sato S."/>
            <person name="Asamizu E."/>
            <person name="Kato T."/>
            <person name="Sasamoto S."/>
            <person name="Watanabe A."/>
            <person name="Idesawa K."/>
            <person name="Ishikawa A."/>
            <person name="Kawashima K."/>
            <person name="Kimura T."/>
            <person name="Kishida Y."/>
            <person name="Kiyokawa C."/>
            <person name="Kohara M."/>
            <person name="Matsumoto M."/>
            <person name="Matsuno A."/>
            <person name="Mochizuki Y."/>
            <person name="Nakayama S."/>
            <person name="Nakazaki N."/>
            <person name="Shimpo S."/>
            <person name="Sugimoto M."/>
            <person name="Takeuchi C."/>
            <person name="Yamada M."/>
            <person name="Tabata S."/>
        </authorList>
    </citation>
    <scope>NUCLEOTIDE SEQUENCE [LARGE SCALE GENOMIC DNA]</scope>
    <source>
        <strain>LMG 29417 / CECT 9101 / MAFF 303099</strain>
    </source>
</reference>
<dbReference type="EC" id="2.5.1.7" evidence="1"/>
<dbReference type="EMBL" id="BA000012">
    <property type="protein sequence ID" value="BAB52752.1"/>
    <property type="molecule type" value="Genomic_DNA"/>
</dbReference>
<dbReference type="SMR" id="Q989E5"/>
<dbReference type="KEGG" id="mlo:mll6459"/>
<dbReference type="eggNOG" id="COG0766">
    <property type="taxonomic scope" value="Bacteria"/>
</dbReference>
<dbReference type="HOGENOM" id="CLU_027387_0_0_5"/>
<dbReference type="UniPathway" id="UPA00219"/>
<dbReference type="Proteomes" id="UP000000552">
    <property type="component" value="Chromosome"/>
</dbReference>
<dbReference type="GO" id="GO:0005737">
    <property type="term" value="C:cytoplasm"/>
    <property type="evidence" value="ECO:0007669"/>
    <property type="project" value="UniProtKB-SubCell"/>
</dbReference>
<dbReference type="GO" id="GO:0008760">
    <property type="term" value="F:UDP-N-acetylglucosamine 1-carboxyvinyltransferase activity"/>
    <property type="evidence" value="ECO:0007669"/>
    <property type="project" value="UniProtKB-UniRule"/>
</dbReference>
<dbReference type="GO" id="GO:0051301">
    <property type="term" value="P:cell division"/>
    <property type="evidence" value="ECO:0007669"/>
    <property type="project" value="UniProtKB-KW"/>
</dbReference>
<dbReference type="GO" id="GO:0071555">
    <property type="term" value="P:cell wall organization"/>
    <property type="evidence" value="ECO:0007669"/>
    <property type="project" value="UniProtKB-KW"/>
</dbReference>
<dbReference type="GO" id="GO:0009252">
    <property type="term" value="P:peptidoglycan biosynthetic process"/>
    <property type="evidence" value="ECO:0007669"/>
    <property type="project" value="UniProtKB-UniRule"/>
</dbReference>
<dbReference type="GO" id="GO:0008360">
    <property type="term" value="P:regulation of cell shape"/>
    <property type="evidence" value="ECO:0007669"/>
    <property type="project" value="UniProtKB-KW"/>
</dbReference>
<dbReference type="GO" id="GO:0019277">
    <property type="term" value="P:UDP-N-acetylgalactosamine biosynthetic process"/>
    <property type="evidence" value="ECO:0007669"/>
    <property type="project" value="InterPro"/>
</dbReference>
<dbReference type="CDD" id="cd01555">
    <property type="entry name" value="UdpNAET"/>
    <property type="match status" value="1"/>
</dbReference>
<dbReference type="FunFam" id="3.65.10.10:FF:000001">
    <property type="entry name" value="UDP-N-acetylglucosamine 1-carboxyvinyltransferase"/>
    <property type="match status" value="1"/>
</dbReference>
<dbReference type="Gene3D" id="3.65.10.10">
    <property type="entry name" value="Enolpyruvate transferase domain"/>
    <property type="match status" value="2"/>
</dbReference>
<dbReference type="HAMAP" id="MF_00111">
    <property type="entry name" value="MurA"/>
    <property type="match status" value="1"/>
</dbReference>
<dbReference type="InterPro" id="IPR001986">
    <property type="entry name" value="Enolpyruvate_Tfrase_dom"/>
</dbReference>
<dbReference type="InterPro" id="IPR036968">
    <property type="entry name" value="Enolpyruvate_Tfrase_sf"/>
</dbReference>
<dbReference type="InterPro" id="IPR050068">
    <property type="entry name" value="MurA_subfamily"/>
</dbReference>
<dbReference type="InterPro" id="IPR013792">
    <property type="entry name" value="RNA3'P_cycl/enolpyr_Trfase_a/b"/>
</dbReference>
<dbReference type="InterPro" id="IPR005750">
    <property type="entry name" value="UDP_GlcNAc_COvinyl_MurA"/>
</dbReference>
<dbReference type="NCBIfam" id="TIGR01072">
    <property type="entry name" value="murA"/>
    <property type="match status" value="1"/>
</dbReference>
<dbReference type="NCBIfam" id="NF006873">
    <property type="entry name" value="PRK09369.1"/>
    <property type="match status" value="1"/>
</dbReference>
<dbReference type="PANTHER" id="PTHR43783">
    <property type="entry name" value="UDP-N-ACETYLGLUCOSAMINE 1-CARBOXYVINYLTRANSFERASE"/>
    <property type="match status" value="1"/>
</dbReference>
<dbReference type="PANTHER" id="PTHR43783:SF1">
    <property type="entry name" value="UDP-N-ACETYLGLUCOSAMINE 1-CARBOXYVINYLTRANSFERASE"/>
    <property type="match status" value="1"/>
</dbReference>
<dbReference type="Pfam" id="PF00275">
    <property type="entry name" value="EPSP_synthase"/>
    <property type="match status" value="1"/>
</dbReference>
<dbReference type="SUPFAM" id="SSF55205">
    <property type="entry name" value="EPT/RTPC-like"/>
    <property type="match status" value="1"/>
</dbReference>
<keyword id="KW-0131">Cell cycle</keyword>
<keyword id="KW-0132">Cell division</keyword>
<keyword id="KW-0133">Cell shape</keyword>
<keyword id="KW-0961">Cell wall biogenesis/degradation</keyword>
<keyword id="KW-0963">Cytoplasm</keyword>
<keyword id="KW-0573">Peptidoglycan synthesis</keyword>
<keyword id="KW-0670">Pyruvate</keyword>
<keyword id="KW-0808">Transferase</keyword>
<gene>
    <name evidence="1" type="primary">murA1</name>
    <name type="ordered locus">mll6459</name>
</gene>
<proteinExistence type="inferred from homology"/>
<sequence length="430" mass="45535">MDRIRIVGGNKLAGSIPISGAKNAALPLMIASLLTDDTLTLENVPHLADVEQLIRILGNHGVDYSVNGRREKQNEGYSRTINFSARNIVDTTAPYELVSKMRASFWVIGPLLARMGEAKVSLPGGCAIGTRPVDLFLEGLQALGADLDVDTGYVIAKTKNGRLVGNRYVFPKVSVGATHVLMMAASLAKGETVLENAACEPEIVNLAECLNAMGARISGAGTPTITIDGVESLSGARVRVIPDRIETGTYAMAVAMTGGDVVLEGARPELLQTALDVISQTGAEITQTNSGIRVKRNGAGISPVDVTTAPFPAFPTDLQAQFMGLMTMAKGKSRITETIFENRFMHVQELARLGAHITLSGQTAIVDGVAKLKGAPVMATDLRASVSLVIAGLAAEGETTVNRVYHLDRGFERLEEKLSNCGAVIERISA</sequence>
<protein>
    <recommendedName>
        <fullName evidence="1">UDP-N-acetylglucosamine 1-carboxyvinyltransferase 1</fullName>
        <ecNumber evidence="1">2.5.1.7</ecNumber>
    </recommendedName>
    <alternativeName>
        <fullName evidence="1">Enoylpyruvate transferase 1</fullName>
    </alternativeName>
    <alternativeName>
        <fullName evidence="1">UDP-N-acetylglucosamine enolpyruvyl transferase 1</fullName>
        <shortName evidence="1">EPT 1</shortName>
    </alternativeName>
</protein>